<keyword id="KW-0010">Activator</keyword>
<keyword id="KW-0244">Early protein</keyword>
<keyword id="KW-0597">Phosphoprotein</keyword>
<keyword id="KW-1185">Reference proteome</keyword>
<keyword id="KW-0804">Transcription</keyword>
<keyword id="KW-0805">Transcription regulation</keyword>
<name>VITF3_VACCW</name>
<comment type="function">
    <text evidence="1">Acts with RNA polymerase to initiate transcription from intermediate gene promoters.</text>
</comment>
<comment type="subunit">
    <text evidence="1">Heterodimerizes with protein A8 to form the virus intermediate transcription factor (VITF)-3.</text>
</comment>
<comment type="induction">
    <text>Expressed in the early phase of the viral replicative cycle.</text>
</comment>
<comment type="similarity">
    <text evidence="2">Belongs to the orthopoxvirus OPG150 family.</text>
</comment>
<accession>Q80HV2</accession>
<organismHost>
    <name type="scientific">Bos taurus</name>
    <name type="common">Bovine</name>
    <dbReference type="NCBI Taxonomy" id="9913"/>
</organismHost>
<gene>
    <name type="primary">OPG150</name>
    <name type="synonym">VITF3L</name>
    <name type="ordered locus">VACWR143</name>
    <name type="ORF">A23R</name>
</gene>
<evidence type="ECO:0000269" key="1">
    <source>
    </source>
</evidence>
<evidence type="ECO:0000305" key="2"/>
<organism>
    <name type="scientific">Vaccinia virus (strain Western Reserve)</name>
    <name type="common">VACV</name>
    <name type="synonym">Vaccinia virus (strain WR)</name>
    <dbReference type="NCBI Taxonomy" id="10254"/>
    <lineage>
        <taxon>Viruses</taxon>
        <taxon>Varidnaviria</taxon>
        <taxon>Bamfordvirae</taxon>
        <taxon>Nucleocytoviricota</taxon>
        <taxon>Pokkesviricetes</taxon>
        <taxon>Chitovirales</taxon>
        <taxon>Poxviridae</taxon>
        <taxon>Chordopoxvirinae</taxon>
        <taxon>Orthopoxvirus</taxon>
        <taxon>Vaccinia virus</taxon>
    </lineage>
</organism>
<feature type="chain" id="PRO_0000099183" description="Intermediate transcription factor 3 large subunit">
    <location>
        <begin position="1"/>
        <end position="382"/>
    </location>
</feature>
<dbReference type="EMBL" id="AY243312">
    <property type="protein sequence ID" value="AAO89422.1"/>
    <property type="molecule type" value="Genomic_DNA"/>
</dbReference>
<dbReference type="RefSeq" id="YP_233025.1">
    <property type="nucleotide sequence ID" value="NC_006998.1"/>
</dbReference>
<dbReference type="SMR" id="Q80HV2"/>
<dbReference type="DNASU" id="3707673"/>
<dbReference type="GeneID" id="3707673"/>
<dbReference type="KEGG" id="vg:3707673"/>
<dbReference type="Proteomes" id="UP000000344">
    <property type="component" value="Genome"/>
</dbReference>
<dbReference type="GO" id="GO:0039695">
    <property type="term" value="P:DNA-templated viral transcription"/>
    <property type="evidence" value="ECO:0000314"/>
    <property type="project" value="UniProtKB"/>
</dbReference>
<dbReference type="InterPro" id="IPR008789">
    <property type="entry name" value="Poxvirus_intermed-TF"/>
</dbReference>
<dbReference type="Pfam" id="PF05718">
    <property type="entry name" value="Pox_int_trans"/>
    <property type="match status" value="1"/>
</dbReference>
<sequence>MDNLFTFLHEIEDRYARTIFNFHLISCDEIGDIYGLMKERISSEDMFDNIVYNKDIHPAIKKLVYCDIQLTKHIINQNTYPVFNDSSQVKCCHYFDINSDNSNISSRTVEIFEREKSSLVSYIKTTNKKRKVNYGEIKKTVHGGTNANYFSGKKSDEYLSTTVRSNINQPWIKTISKRMRVDIINHSIVTRGKSSILQTIEIIFTNRTCVKIFKDSTMHIILSKDKDEKGCIHMIDKLFYVYYNLFLLFEDIIQNEYFKEVANVVNHVLTATALDEKLFLIKKMAEHDVYGVSNFKIGMFNLTFIKSLDHTVFPSLLDEDSKIKFFKGKKLNIVALRSLEDCINYVTKSENMIEMMKERSTILNSIDIETESVDRLKELLLK</sequence>
<reference key="1">
    <citation type="submission" date="2003-02" db="EMBL/GenBank/DDBJ databases">
        <title>Sequencing of the coding region of Vaccinia-WR to an average 9-fold redundancy and an error rate of 0.16/10kb.</title>
        <authorList>
            <person name="Esposito J.J."/>
            <person name="Frace A.M."/>
            <person name="Sammons S.A."/>
            <person name="Olsen-Rasmussen M."/>
            <person name="Osborne J."/>
            <person name="Wohlhueter R."/>
        </authorList>
    </citation>
    <scope>NUCLEOTIDE SEQUENCE [LARGE SCALE GENOMIC DNA]</scope>
</reference>
<reference key="2">
    <citation type="journal article" date="1999" name="Proc. Natl. Acad. Sci. U.S.A.">
        <title>Identification of a transcription factor, encoded by two vaccinia virus early genes, that regulates the intermediate stage of viral gene expression.</title>
        <authorList>
            <person name="Sanz P."/>
            <person name="Moss B."/>
        </authorList>
    </citation>
    <scope>FUNCTION</scope>
    <scope>SUBUNIT</scope>
</reference>
<protein>
    <recommendedName>
        <fullName>Intermediate transcription factor 3 large subunit</fullName>
    </recommendedName>
    <alternativeName>
        <fullName>VITF-3</fullName>
    </alternativeName>
</protein>
<proteinExistence type="evidence at protein level"/>